<keyword id="KW-0963">Cytoplasm</keyword>
<keyword id="KW-0378">Hydrolase</keyword>
<keyword id="KW-0546">Nucleotide metabolism</keyword>
<keyword id="KW-1185">Reference proteome</keyword>
<comment type="function">
    <text evidence="1">Nucleoside triphosphate pyrophosphatase that hydrolyzes dTTP and UTP. May have a dual role in cell division arrest and in preventing the incorporation of modified nucleotides into cellular nucleic acids.</text>
</comment>
<comment type="catalytic activity">
    <reaction evidence="1">
        <text>dTTP + H2O = dTMP + diphosphate + H(+)</text>
        <dbReference type="Rhea" id="RHEA:28534"/>
        <dbReference type="ChEBI" id="CHEBI:15377"/>
        <dbReference type="ChEBI" id="CHEBI:15378"/>
        <dbReference type="ChEBI" id="CHEBI:33019"/>
        <dbReference type="ChEBI" id="CHEBI:37568"/>
        <dbReference type="ChEBI" id="CHEBI:63528"/>
        <dbReference type="EC" id="3.6.1.9"/>
    </reaction>
</comment>
<comment type="catalytic activity">
    <reaction evidence="1">
        <text>UTP + H2O = UMP + diphosphate + H(+)</text>
        <dbReference type="Rhea" id="RHEA:29395"/>
        <dbReference type="ChEBI" id="CHEBI:15377"/>
        <dbReference type="ChEBI" id="CHEBI:15378"/>
        <dbReference type="ChEBI" id="CHEBI:33019"/>
        <dbReference type="ChEBI" id="CHEBI:46398"/>
        <dbReference type="ChEBI" id="CHEBI:57865"/>
        <dbReference type="EC" id="3.6.1.9"/>
    </reaction>
</comment>
<comment type="cofactor">
    <cofactor evidence="1">
        <name>a divalent metal cation</name>
        <dbReference type="ChEBI" id="CHEBI:60240"/>
    </cofactor>
</comment>
<comment type="subcellular location">
    <subcellularLocation>
        <location evidence="1">Cytoplasm</location>
    </subcellularLocation>
</comment>
<comment type="similarity">
    <text evidence="1">Belongs to the Maf family. YhdE subfamily.</text>
</comment>
<evidence type="ECO:0000255" key="1">
    <source>
        <dbReference type="HAMAP-Rule" id="MF_00528"/>
    </source>
</evidence>
<feature type="chain" id="PRO_0000267392" description="dTTP/UTP pyrophosphatase">
    <location>
        <begin position="1"/>
        <end position="206"/>
    </location>
</feature>
<feature type="active site" description="Proton acceptor" evidence="1">
    <location>
        <position position="79"/>
    </location>
</feature>
<feature type="site" description="Important for substrate specificity" evidence="1">
    <location>
        <position position="15"/>
    </location>
</feature>
<feature type="site" description="Important for substrate specificity" evidence="1">
    <location>
        <position position="80"/>
    </location>
</feature>
<feature type="site" description="Important for substrate specificity" evidence="1">
    <location>
        <position position="163"/>
    </location>
</feature>
<protein>
    <recommendedName>
        <fullName evidence="1">dTTP/UTP pyrophosphatase</fullName>
        <shortName evidence="1">dTTPase/UTPase</shortName>
        <ecNumber evidence="1">3.6.1.9</ecNumber>
    </recommendedName>
    <alternativeName>
        <fullName evidence="1">Nucleoside triphosphate pyrophosphatase</fullName>
    </alternativeName>
    <alternativeName>
        <fullName evidence="1">Nucleotide pyrophosphatase</fullName>
        <shortName evidence="1">Nucleotide PPase</shortName>
    </alternativeName>
</protein>
<proteinExistence type="inferred from homology"/>
<reference key="1">
    <citation type="journal article" date="2006" name="Proc. Natl. Acad. Sci. U.S.A.">
        <title>The partitioned Rhizobium etli genome: genetic and metabolic redundancy in seven interacting replicons.</title>
        <authorList>
            <person name="Gonzalez V."/>
            <person name="Santamaria R.I."/>
            <person name="Bustos P."/>
            <person name="Hernandez-Gonzalez I."/>
            <person name="Medrano-Soto A."/>
            <person name="Moreno-Hagelsieb G."/>
            <person name="Janga S.C."/>
            <person name="Ramirez M.A."/>
            <person name="Jimenez-Jacinto V."/>
            <person name="Collado-Vides J."/>
            <person name="Davila G."/>
        </authorList>
    </citation>
    <scope>NUCLEOTIDE SEQUENCE [LARGE SCALE GENOMIC DNA]</scope>
    <source>
        <strain>ATCC 51251 / DSM 11541 / JCM 21823 / NBRC 15573 / CFN 42</strain>
    </source>
</reference>
<sequence>MALKYKLILASGSPRRVDLLNQAGIEPSRLMPMDIDETPKKSEHPRSLARRLSAEKAEAALAAIKGDITWKGSYILSADTVVAVGRRILGKAEFADEALSSLHLLSGRNHLVYTGICLVTPDRKIRQKIVETKVRFKRLSGFEIENYLASGQWRGKAGAYGIQGLAGTFVQKMVGSYTNVVGLPLYETILLLTGEGFDVHSRWPEG</sequence>
<gene>
    <name type="ordered locus">RHE_CH00585</name>
</gene>
<organism>
    <name type="scientific">Rhizobium etli (strain ATCC 51251 / DSM 11541 / JCM 21823 / NBRC 15573 / CFN 42)</name>
    <dbReference type="NCBI Taxonomy" id="347834"/>
    <lineage>
        <taxon>Bacteria</taxon>
        <taxon>Pseudomonadati</taxon>
        <taxon>Pseudomonadota</taxon>
        <taxon>Alphaproteobacteria</taxon>
        <taxon>Hyphomicrobiales</taxon>
        <taxon>Rhizobiaceae</taxon>
        <taxon>Rhizobium/Agrobacterium group</taxon>
        <taxon>Rhizobium</taxon>
    </lineage>
</organism>
<accession>Q2KCN4</accession>
<name>NTPPA_RHIEC</name>
<dbReference type="EC" id="3.6.1.9" evidence="1"/>
<dbReference type="EMBL" id="CP000133">
    <property type="protein sequence ID" value="ABC89402.1"/>
    <property type="molecule type" value="Genomic_DNA"/>
</dbReference>
<dbReference type="RefSeq" id="WP_011423951.1">
    <property type="nucleotide sequence ID" value="NC_007761.1"/>
</dbReference>
<dbReference type="SMR" id="Q2KCN4"/>
<dbReference type="KEGG" id="ret:RHE_CH00585"/>
<dbReference type="eggNOG" id="COG0424">
    <property type="taxonomic scope" value="Bacteria"/>
</dbReference>
<dbReference type="HOGENOM" id="CLU_040416_2_0_5"/>
<dbReference type="OrthoDB" id="9807767at2"/>
<dbReference type="Proteomes" id="UP000001936">
    <property type="component" value="Chromosome"/>
</dbReference>
<dbReference type="GO" id="GO:0005737">
    <property type="term" value="C:cytoplasm"/>
    <property type="evidence" value="ECO:0007669"/>
    <property type="project" value="UniProtKB-SubCell"/>
</dbReference>
<dbReference type="GO" id="GO:0036218">
    <property type="term" value="F:dTTP diphosphatase activity"/>
    <property type="evidence" value="ECO:0007669"/>
    <property type="project" value="RHEA"/>
</dbReference>
<dbReference type="GO" id="GO:0036221">
    <property type="term" value="F:UTP diphosphatase activity"/>
    <property type="evidence" value="ECO:0007669"/>
    <property type="project" value="RHEA"/>
</dbReference>
<dbReference type="GO" id="GO:0009117">
    <property type="term" value="P:nucleotide metabolic process"/>
    <property type="evidence" value="ECO:0007669"/>
    <property type="project" value="UniProtKB-KW"/>
</dbReference>
<dbReference type="CDD" id="cd00555">
    <property type="entry name" value="Maf"/>
    <property type="match status" value="1"/>
</dbReference>
<dbReference type="FunFam" id="3.90.950.10:FF:000005">
    <property type="entry name" value="7-methyl-GTP pyrophosphatase"/>
    <property type="match status" value="1"/>
</dbReference>
<dbReference type="Gene3D" id="3.90.950.10">
    <property type="match status" value="1"/>
</dbReference>
<dbReference type="HAMAP" id="MF_00528">
    <property type="entry name" value="Maf"/>
    <property type="match status" value="1"/>
</dbReference>
<dbReference type="InterPro" id="IPR029001">
    <property type="entry name" value="ITPase-like_fam"/>
</dbReference>
<dbReference type="InterPro" id="IPR003697">
    <property type="entry name" value="Maf-like"/>
</dbReference>
<dbReference type="NCBIfam" id="TIGR00172">
    <property type="entry name" value="maf"/>
    <property type="match status" value="1"/>
</dbReference>
<dbReference type="NCBIfam" id="NF002401">
    <property type="entry name" value="PRK01441.1"/>
    <property type="match status" value="1"/>
</dbReference>
<dbReference type="PANTHER" id="PTHR43213">
    <property type="entry name" value="BIFUNCTIONAL DTTP/UTP PYROPHOSPHATASE/METHYLTRANSFERASE PROTEIN-RELATED"/>
    <property type="match status" value="1"/>
</dbReference>
<dbReference type="PANTHER" id="PTHR43213:SF5">
    <property type="entry name" value="BIFUNCTIONAL DTTP_UTP PYROPHOSPHATASE_METHYLTRANSFERASE PROTEIN-RELATED"/>
    <property type="match status" value="1"/>
</dbReference>
<dbReference type="Pfam" id="PF02545">
    <property type="entry name" value="Maf"/>
    <property type="match status" value="1"/>
</dbReference>
<dbReference type="PIRSF" id="PIRSF006305">
    <property type="entry name" value="Maf"/>
    <property type="match status" value="1"/>
</dbReference>
<dbReference type="SUPFAM" id="SSF52972">
    <property type="entry name" value="ITPase-like"/>
    <property type="match status" value="1"/>
</dbReference>